<accession>Q726S6</accession>
<protein>
    <recommendedName>
        <fullName evidence="1">Acetate kinase</fullName>
        <ecNumber evidence="1">2.7.2.1</ecNumber>
    </recommendedName>
    <alternativeName>
        <fullName evidence="1">Acetokinase</fullName>
    </alternativeName>
</protein>
<organism>
    <name type="scientific">Nitratidesulfovibrio vulgaris (strain ATCC 29579 / DSM 644 / CCUG 34227 / NCIMB 8303 / VKM B-1760 / Hildenborough)</name>
    <name type="common">Desulfovibrio vulgaris</name>
    <dbReference type="NCBI Taxonomy" id="882"/>
    <lineage>
        <taxon>Bacteria</taxon>
        <taxon>Pseudomonadati</taxon>
        <taxon>Thermodesulfobacteriota</taxon>
        <taxon>Desulfovibrionia</taxon>
        <taxon>Desulfovibrionales</taxon>
        <taxon>Desulfovibrionaceae</taxon>
        <taxon>Nitratidesulfovibrio</taxon>
    </lineage>
</organism>
<comment type="function">
    <text evidence="1">Catalyzes the formation of acetyl phosphate from acetate and ATP. Can also catalyze the reverse reaction.</text>
</comment>
<comment type="catalytic activity">
    <reaction evidence="1">
        <text>acetate + ATP = acetyl phosphate + ADP</text>
        <dbReference type="Rhea" id="RHEA:11352"/>
        <dbReference type="ChEBI" id="CHEBI:22191"/>
        <dbReference type="ChEBI" id="CHEBI:30089"/>
        <dbReference type="ChEBI" id="CHEBI:30616"/>
        <dbReference type="ChEBI" id="CHEBI:456216"/>
        <dbReference type="EC" id="2.7.2.1"/>
    </reaction>
</comment>
<comment type="cofactor">
    <cofactor evidence="1">
        <name>Mg(2+)</name>
        <dbReference type="ChEBI" id="CHEBI:18420"/>
    </cofactor>
    <cofactor evidence="1">
        <name>Mn(2+)</name>
        <dbReference type="ChEBI" id="CHEBI:29035"/>
    </cofactor>
    <text evidence="1">Mg(2+). Can also accept Mn(2+).</text>
</comment>
<comment type="pathway">
    <text evidence="1">Metabolic intermediate biosynthesis; acetyl-CoA biosynthesis; acetyl-CoA from acetate: step 1/2.</text>
</comment>
<comment type="subunit">
    <text evidence="1">Homodimer.</text>
</comment>
<comment type="subcellular location">
    <subcellularLocation>
        <location evidence="1">Cytoplasm</location>
    </subcellularLocation>
</comment>
<comment type="similarity">
    <text evidence="1">Belongs to the acetokinase family.</text>
</comment>
<feature type="chain" id="PRO_0000107556" description="Acetate kinase">
    <location>
        <begin position="1"/>
        <end position="402"/>
    </location>
</feature>
<feature type="active site" description="Proton donor/acceptor" evidence="1">
    <location>
        <position position="152"/>
    </location>
</feature>
<feature type="binding site" evidence="1">
    <location>
        <position position="7"/>
    </location>
    <ligand>
        <name>Mg(2+)</name>
        <dbReference type="ChEBI" id="CHEBI:18420"/>
    </ligand>
</feature>
<feature type="binding site" evidence="1">
    <location>
        <position position="14"/>
    </location>
    <ligand>
        <name>ATP</name>
        <dbReference type="ChEBI" id="CHEBI:30616"/>
    </ligand>
</feature>
<feature type="binding site" evidence="1">
    <location>
        <position position="95"/>
    </location>
    <ligand>
        <name>substrate</name>
    </ligand>
</feature>
<feature type="binding site" evidence="1">
    <location>
        <begin position="212"/>
        <end position="216"/>
    </location>
    <ligand>
        <name>ATP</name>
        <dbReference type="ChEBI" id="CHEBI:30616"/>
    </ligand>
</feature>
<feature type="binding site" evidence="1">
    <location>
        <begin position="286"/>
        <end position="288"/>
    </location>
    <ligand>
        <name>ATP</name>
        <dbReference type="ChEBI" id="CHEBI:30616"/>
    </ligand>
</feature>
<feature type="binding site" evidence="1">
    <location>
        <begin position="334"/>
        <end position="338"/>
    </location>
    <ligand>
        <name>ATP</name>
        <dbReference type="ChEBI" id="CHEBI:30616"/>
    </ligand>
</feature>
<feature type="binding site" evidence="1">
    <location>
        <position position="388"/>
    </location>
    <ligand>
        <name>Mg(2+)</name>
        <dbReference type="ChEBI" id="CHEBI:18420"/>
    </ligand>
</feature>
<feature type="site" description="Transition state stabilizer" evidence="1">
    <location>
        <position position="184"/>
    </location>
</feature>
<feature type="site" description="Transition state stabilizer" evidence="1">
    <location>
        <position position="245"/>
    </location>
</feature>
<evidence type="ECO:0000255" key="1">
    <source>
        <dbReference type="HAMAP-Rule" id="MF_00020"/>
    </source>
</evidence>
<reference key="1">
    <citation type="journal article" date="2004" name="Nat. Biotechnol.">
        <title>The genome sequence of the anaerobic, sulfate-reducing bacterium Desulfovibrio vulgaris Hildenborough.</title>
        <authorList>
            <person name="Heidelberg J.F."/>
            <person name="Seshadri R."/>
            <person name="Haveman S.A."/>
            <person name="Hemme C.L."/>
            <person name="Paulsen I.T."/>
            <person name="Kolonay J.F."/>
            <person name="Eisen J.A."/>
            <person name="Ward N.L."/>
            <person name="Methe B.A."/>
            <person name="Brinkac L.M."/>
            <person name="Daugherty S.C."/>
            <person name="DeBoy R.T."/>
            <person name="Dodson R.J."/>
            <person name="Durkin A.S."/>
            <person name="Madupu R."/>
            <person name="Nelson W.C."/>
            <person name="Sullivan S.A."/>
            <person name="Fouts D.E."/>
            <person name="Haft D.H."/>
            <person name="Selengut J."/>
            <person name="Peterson J.D."/>
            <person name="Davidsen T.M."/>
            <person name="Zafar N."/>
            <person name="Zhou L."/>
            <person name="Radune D."/>
            <person name="Dimitrov G."/>
            <person name="Hance M."/>
            <person name="Tran K."/>
            <person name="Khouri H.M."/>
            <person name="Gill J."/>
            <person name="Utterback T.R."/>
            <person name="Feldblyum T.V."/>
            <person name="Wall J.D."/>
            <person name="Voordouw G."/>
            <person name="Fraser C.M."/>
        </authorList>
    </citation>
    <scope>NUCLEOTIDE SEQUENCE [LARGE SCALE GENOMIC DNA]</scope>
    <source>
        <strain>ATCC 29579 / DSM 644 / CCUG 34227 / NCIMB 8303 / VKM B-1760 / Hildenborough</strain>
    </source>
</reference>
<proteinExistence type="inferred from homology"/>
<sequence>MNVLVINSGSSSIKYQLIDMEREVPLCSGLVERIGEPMGKLTHKIRPDAEGEEKLTFEQPFTNHVEGMKRVVELITDADKGVIKDKSEIGAIGHRVLLGGEEIKQSVRIDDWAKGVIRDYIPLGPLHNPANLAGIEVAEELFPGLPNVGVFDTEFHQSMPAKAYLYPLPIELYEELKIRRYGFHGTSHRYITKRTAQYLGKPLDELNIITCHLGNGCSMAAVKNGKCVDTTMGITPLEGLMMGTRCGDIDPAIVPFLMEKKNLSPAEADTLMNKQSGLKGMCGMNDMRDLHAARENGNERAQLAFEMFTYRIKKYIGAYYAVLGRVDAVVFTAGIGENDDFVRAEVCAGLDSLGIAVDPARNAVRNGQPRHISPDGSRVAVLVVPTNEELEIAQATLDVLKG</sequence>
<keyword id="KW-0067">ATP-binding</keyword>
<keyword id="KW-0963">Cytoplasm</keyword>
<keyword id="KW-0418">Kinase</keyword>
<keyword id="KW-0460">Magnesium</keyword>
<keyword id="KW-0479">Metal-binding</keyword>
<keyword id="KW-0547">Nucleotide-binding</keyword>
<keyword id="KW-1185">Reference proteome</keyword>
<keyword id="KW-0808">Transferase</keyword>
<dbReference type="EC" id="2.7.2.1" evidence="1"/>
<dbReference type="EMBL" id="AE017285">
    <property type="protein sequence ID" value="AAS97501.1"/>
    <property type="molecule type" value="Genomic_DNA"/>
</dbReference>
<dbReference type="RefSeq" id="WP_010940289.1">
    <property type="nucleotide sequence ID" value="NC_002937.3"/>
</dbReference>
<dbReference type="RefSeq" id="YP_012241.1">
    <property type="nucleotide sequence ID" value="NC_002937.3"/>
</dbReference>
<dbReference type="SMR" id="Q726S6"/>
<dbReference type="IntAct" id="Q726S6">
    <property type="interactions" value="1"/>
</dbReference>
<dbReference type="STRING" id="882.DVU_3030"/>
<dbReference type="PaxDb" id="882-DVU_3030"/>
<dbReference type="EnsemblBacteria" id="AAS97501">
    <property type="protein sequence ID" value="AAS97501"/>
    <property type="gene ID" value="DVU_3030"/>
</dbReference>
<dbReference type="KEGG" id="dvu:DVU_3030"/>
<dbReference type="PATRIC" id="fig|882.5.peg.2748"/>
<dbReference type="eggNOG" id="COG0282">
    <property type="taxonomic scope" value="Bacteria"/>
</dbReference>
<dbReference type="HOGENOM" id="CLU_020352_0_1_7"/>
<dbReference type="OrthoDB" id="9802453at2"/>
<dbReference type="PhylomeDB" id="Q726S6"/>
<dbReference type="UniPathway" id="UPA00340">
    <property type="reaction ID" value="UER00458"/>
</dbReference>
<dbReference type="Proteomes" id="UP000002194">
    <property type="component" value="Chromosome"/>
</dbReference>
<dbReference type="GO" id="GO:0005737">
    <property type="term" value="C:cytoplasm"/>
    <property type="evidence" value="ECO:0007669"/>
    <property type="project" value="UniProtKB-SubCell"/>
</dbReference>
<dbReference type="GO" id="GO:0008776">
    <property type="term" value="F:acetate kinase activity"/>
    <property type="evidence" value="ECO:0007669"/>
    <property type="project" value="UniProtKB-UniRule"/>
</dbReference>
<dbReference type="GO" id="GO:0005524">
    <property type="term" value="F:ATP binding"/>
    <property type="evidence" value="ECO:0007669"/>
    <property type="project" value="UniProtKB-KW"/>
</dbReference>
<dbReference type="GO" id="GO:0000287">
    <property type="term" value="F:magnesium ion binding"/>
    <property type="evidence" value="ECO:0007669"/>
    <property type="project" value="UniProtKB-UniRule"/>
</dbReference>
<dbReference type="GO" id="GO:0006083">
    <property type="term" value="P:acetate metabolic process"/>
    <property type="evidence" value="ECO:0007669"/>
    <property type="project" value="TreeGrafter"/>
</dbReference>
<dbReference type="GO" id="GO:0006085">
    <property type="term" value="P:acetyl-CoA biosynthetic process"/>
    <property type="evidence" value="ECO:0007669"/>
    <property type="project" value="UniProtKB-UniRule"/>
</dbReference>
<dbReference type="CDD" id="cd24010">
    <property type="entry name" value="ASKHA_NBD_AcK_PK"/>
    <property type="match status" value="1"/>
</dbReference>
<dbReference type="Gene3D" id="3.30.420.40">
    <property type="match status" value="2"/>
</dbReference>
<dbReference type="HAMAP" id="MF_00020">
    <property type="entry name" value="Acetate_kinase"/>
    <property type="match status" value="1"/>
</dbReference>
<dbReference type="InterPro" id="IPR004372">
    <property type="entry name" value="Ac/propionate_kinase"/>
</dbReference>
<dbReference type="InterPro" id="IPR000890">
    <property type="entry name" value="Aliphatic_acid_kin_short-chain"/>
</dbReference>
<dbReference type="InterPro" id="IPR023865">
    <property type="entry name" value="Aliphatic_acid_kinase_CS"/>
</dbReference>
<dbReference type="InterPro" id="IPR043129">
    <property type="entry name" value="ATPase_NBD"/>
</dbReference>
<dbReference type="NCBIfam" id="TIGR00016">
    <property type="entry name" value="ackA"/>
    <property type="match status" value="1"/>
</dbReference>
<dbReference type="PANTHER" id="PTHR21060">
    <property type="entry name" value="ACETATE KINASE"/>
    <property type="match status" value="1"/>
</dbReference>
<dbReference type="PANTHER" id="PTHR21060:SF15">
    <property type="entry name" value="ACETATE KINASE-RELATED"/>
    <property type="match status" value="1"/>
</dbReference>
<dbReference type="Pfam" id="PF00871">
    <property type="entry name" value="Acetate_kinase"/>
    <property type="match status" value="1"/>
</dbReference>
<dbReference type="PIRSF" id="PIRSF000722">
    <property type="entry name" value="Acetate_prop_kin"/>
    <property type="match status" value="1"/>
</dbReference>
<dbReference type="PRINTS" id="PR00471">
    <property type="entry name" value="ACETATEKNASE"/>
</dbReference>
<dbReference type="SUPFAM" id="SSF53067">
    <property type="entry name" value="Actin-like ATPase domain"/>
    <property type="match status" value="2"/>
</dbReference>
<dbReference type="PROSITE" id="PS01075">
    <property type="entry name" value="ACETATE_KINASE_1"/>
    <property type="match status" value="1"/>
</dbReference>
<dbReference type="PROSITE" id="PS01076">
    <property type="entry name" value="ACETATE_KINASE_2"/>
    <property type="match status" value="1"/>
</dbReference>
<gene>
    <name evidence="1" type="primary">ackA</name>
    <name type="ordered locus">DVU_3030</name>
</gene>
<name>ACKA_NITV2</name>